<sequence>VLSPADKKNVKDCWEKIGGHGAEYGAEALERMFLSFPTTKTYFPHFDLSHGSAQVQGHGKKVADALANAAAHVDDLPGALSALSDLHAHKLRVDPVNFKLLSHCLLVTLAAHHPAEFTPAVHASLDKFLASVSTVLTSKYR</sequence>
<gene>
    <name type="primary">HBA</name>
</gene>
<accession>P09420</accession>
<reference key="1">
    <citation type="journal article" date="1986" name="Biol. Chem. Hoppe-Seyler">
        <title>The primary structure of the hemoglobin of the European Souslik (Citellus citellus, Rodentia).</title>
        <authorList>
            <person name="Soskic V."/>
            <person name="Grujic-Injac B."/>
            <person name="Braunitzer G."/>
        </authorList>
    </citation>
    <scope>PROTEIN SEQUENCE</scope>
</reference>
<feature type="chain" id="PRO_0000052764" description="Hemoglobin subunit alpha">
    <location>
        <begin position="1"/>
        <end position="141"/>
    </location>
</feature>
<feature type="peptide" id="PRO_0000455945" description="Hemopressin" evidence="2">
    <location>
        <begin position="95"/>
        <end position="103"/>
    </location>
</feature>
<feature type="domain" description="Globin" evidence="4">
    <location>
        <begin position="1"/>
        <end position="141"/>
    </location>
</feature>
<feature type="binding site" evidence="4">
    <location>
        <position position="58"/>
    </location>
    <ligand>
        <name>O2</name>
        <dbReference type="ChEBI" id="CHEBI:15379"/>
    </ligand>
</feature>
<feature type="binding site" description="proximal binding residue" evidence="4">
    <location>
        <position position="87"/>
    </location>
    <ligand>
        <name>heme b</name>
        <dbReference type="ChEBI" id="CHEBI:60344"/>
    </ligand>
    <ligandPart>
        <name>Fe</name>
        <dbReference type="ChEBI" id="CHEBI:18248"/>
    </ligandPart>
</feature>
<feature type="modified residue" description="Phosphoserine" evidence="3">
    <location>
        <position position="3"/>
    </location>
</feature>
<feature type="modified residue" description="N6-succinyllysine" evidence="1">
    <location>
        <position position="7"/>
    </location>
</feature>
<feature type="modified residue" description="N6-succinyllysine" evidence="1">
    <location>
        <position position="11"/>
    </location>
</feature>
<feature type="modified residue" description="N6-acetyllysine; alternate" evidence="3">
    <location>
        <position position="16"/>
    </location>
</feature>
<feature type="modified residue" description="N6-succinyllysine; alternate" evidence="1">
    <location>
        <position position="16"/>
    </location>
</feature>
<feature type="modified residue" description="Phosphotyrosine" evidence="3">
    <location>
        <position position="24"/>
    </location>
</feature>
<feature type="modified residue" description="Phosphoserine" evidence="3">
    <location>
        <position position="35"/>
    </location>
</feature>
<feature type="modified residue" description="N6-succinyllysine" evidence="1">
    <location>
        <position position="40"/>
    </location>
</feature>
<feature type="modified residue" description="Phosphoserine" evidence="3">
    <location>
        <position position="49"/>
    </location>
</feature>
<feature type="modified residue" description="Phosphoserine" evidence="1">
    <location>
        <position position="102"/>
    </location>
</feature>
<feature type="modified residue" description="Phosphothreonine" evidence="1">
    <location>
        <position position="108"/>
    </location>
</feature>
<feature type="modified residue" description="Phosphoserine" evidence="1">
    <location>
        <position position="124"/>
    </location>
</feature>
<feature type="modified residue" description="Phosphoserine" evidence="1">
    <location>
        <position position="131"/>
    </location>
</feature>
<feature type="modified residue" description="Phosphothreonine" evidence="1">
    <location>
        <position position="134"/>
    </location>
</feature>
<feature type="modified residue" description="Phosphothreonine" evidence="1">
    <location>
        <position position="137"/>
    </location>
</feature>
<feature type="modified residue" description="Phosphoserine" evidence="1">
    <location>
        <position position="138"/>
    </location>
</feature>
<comment type="function">
    <text>Involved in oxygen transport from the lung to the various peripheral tissues.</text>
</comment>
<comment type="function">
    <molecule>Hemopressin</molecule>
    <text evidence="2">Hemopressin acts as an antagonist peptide of the cannabinoid receptor CNR1. Hemopressin-binding efficiently blocks cannabinoid receptor CNR1 and subsequent signaling.</text>
</comment>
<comment type="subunit">
    <text>Heterotetramer of two alpha chains and two beta chains.</text>
</comment>
<comment type="tissue specificity">
    <text>Red blood cells.</text>
</comment>
<comment type="similarity">
    <text evidence="4">Belongs to the globin family.</text>
</comment>
<proteinExistence type="evidence at protein level"/>
<protein>
    <recommendedName>
        <fullName>Hemoglobin subunit alpha</fullName>
    </recommendedName>
    <alternativeName>
        <fullName>Alpha-globin</fullName>
    </alternativeName>
    <alternativeName>
        <fullName>Hemoglobin alpha chain</fullName>
    </alternativeName>
    <component>
        <recommendedName>
            <fullName evidence="2">Hemopressin</fullName>
        </recommendedName>
    </component>
</protein>
<name>HBA_SPECI</name>
<evidence type="ECO:0000250" key="1">
    <source>
        <dbReference type="UniProtKB" id="P01942"/>
    </source>
</evidence>
<evidence type="ECO:0000250" key="2">
    <source>
        <dbReference type="UniProtKB" id="P01946"/>
    </source>
</evidence>
<evidence type="ECO:0000250" key="3">
    <source>
        <dbReference type="UniProtKB" id="P69905"/>
    </source>
</evidence>
<evidence type="ECO:0000255" key="4">
    <source>
        <dbReference type="PROSITE-ProRule" id="PRU00238"/>
    </source>
</evidence>
<keyword id="KW-0007">Acetylation</keyword>
<keyword id="KW-0903">Direct protein sequencing</keyword>
<keyword id="KW-0349">Heme</keyword>
<keyword id="KW-0408">Iron</keyword>
<keyword id="KW-0479">Metal-binding</keyword>
<keyword id="KW-0561">Oxygen transport</keyword>
<keyword id="KW-0597">Phosphoprotein</keyword>
<keyword id="KW-0813">Transport</keyword>
<dbReference type="PIR" id="A25359">
    <property type="entry name" value="A25359"/>
</dbReference>
<dbReference type="SMR" id="P09420"/>
<dbReference type="GO" id="GO:0072562">
    <property type="term" value="C:blood microparticle"/>
    <property type="evidence" value="ECO:0007669"/>
    <property type="project" value="TreeGrafter"/>
</dbReference>
<dbReference type="GO" id="GO:0031838">
    <property type="term" value="C:haptoglobin-hemoglobin complex"/>
    <property type="evidence" value="ECO:0007669"/>
    <property type="project" value="TreeGrafter"/>
</dbReference>
<dbReference type="GO" id="GO:0005833">
    <property type="term" value="C:hemoglobin complex"/>
    <property type="evidence" value="ECO:0007669"/>
    <property type="project" value="InterPro"/>
</dbReference>
<dbReference type="GO" id="GO:0031720">
    <property type="term" value="F:haptoglobin binding"/>
    <property type="evidence" value="ECO:0007669"/>
    <property type="project" value="TreeGrafter"/>
</dbReference>
<dbReference type="GO" id="GO:0020037">
    <property type="term" value="F:heme binding"/>
    <property type="evidence" value="ECO:0007669"/>
    <property type="project" value="InterPro"/>
</dbReference>
<dbReference type="GO" id="GO:0005506">
    <property type="term" value="F:iron ion binding"/>
    <property type="evidence" value="ECO:0007669"/>
    <property type="project" value="InterPro"/>
</dbReference>
<dbReference type="GO" id="GO:0043177">
    <property type="term" value="F:organic acid binding"/>
    <property type="evidence" value="ECO:0007669"/>
    <property type="project" value="TreeGrafter"/>
</dbReference>
<dbReference type="GO" id="GO:0019825">
    <property type="term" value="F:oxygen binding"/>
    <property type="evidence" value="ECO:0007669"/>
    <property type="project" value="InterPro"/>
</dbReference>
<dbReference type="GO" id="GO:0005344">
    <property type="term" value="F:oxygen carrier activity"/>
    <property type="evidence" value="ECO:0007669"/>
    <property type="project" value="UniProtKB-KW"/>
</dbReference>
<dbReference type="GO" id="GO:0004601">
    <property type="term" value="F:peroxidase activity"/>
    <property type="evidence" value="ECO:0007669"/>
    <property type="project" value="TreeGrafter"/>
</dbReference>
<dbReference type="GO" id="GO:0042744">
    <property type="term" value="P:hydrogen peroxide catabolic process"/>
    <property type="evidence" value="ECO:0007669"/>
    <property type="project" value="TreeGrafter"/>
</dbReference>
<dbReference type="CDD" id="cd08927">
    <property type="entry name" value="Hb-alpha-like"/>
    <property type="match status" value="1"/>
</dbReference>
<dbReference type="FunFam" id="1.10.490.10:FF:000002">
    <property type="entry name" value="Hemoglobin subunit alpha"/>
    <property type="match status" value="1"/>
</dbReference>
<dbReference type="Gene3D" id="1.10.490.10">
    <property type="entry name" value="Globins"/>
    <property type="match status" value="1"/>
</dbReference>
<dbReference type="InterPro" id="IPR000971">
    <property type="entry name" value="Globin"/>
</dbReference>
<dbReference type="InterPro" id="IPR009050">
    <property type="entry name" value="Globin-like_sf"/>
</dbReference>
<dbReference type="InterPro" id="IPR012292">
    <property type="entry name" value="Globin/Proto"/>
</dbReference>
<dbReference type="InterPro" id="IPR002338">
    <property type="entry name" value="Hemoglobin_a-typ"/>
</dbReference>
<dbReference type="InterPro" id="IPR050056">
    <property type="entry name" value="Hemoglobin_oxygen_transport"/>
</dbReference>
<dbReference type="InterPro" id="IPR002339">
    <property type="entry name" value="Hemoglobin_pi"/>
</dbReference>
<dbReference type="PANTHER" id="PTHR11442">
    <property type="entry name" value="HEMOGLOBIN FAMILY MEMBER"/>
    <property type="match status" value="1"/>
</dbReference>
<dbReference type="PANTHER" id="PTHR11442:SF48">
    <property type="entry name" value="HEMOGLOBIN SUBUNIT ALPHA"/>
    <property type="match status" value="1"/>
</dbReference>
<dbReference type="Pfam" id="PF00042">
    <property type="entry name" value="Globin"/>
    <property type="match status" value="1"/>
</dbReference>
<dbReference type="PRINTS" id="PR00612">
    <property type="entry name" value="ALPHAHAEM"/>
</dbReference>
<dbReference type="PRINTS" id="PR00815">
    <property type="entry name" value="PIHAEM"/>
</dbReference>
<dbReference type="SUPFAM" id="SSF46458">
    <property type="entry name" value="Globin-like"/>
    <property type="match status" value="1"/>
</dbReference>
<dbReference type="PROSITE" id="PS01033">
    <property type="entry name" value="GLOBIN"/>
    <property type="match status" value="1"/>
</dbReference>
<organism>
    <name type="scientific">Spermophilus citellus</name>
    <name type="common">European ground squirrel</name>
    <name type="synonym">Citellus citellus</name>
    <dbReference type="NCBI Taxonomy" id="9997"/>
    <lineage>
        <taxon>Eukaryota</taxon>
        <taxon>Metazoa</taxon>
        <taxon>Chordata</taxon>
        <taxon>Craniata</taxon>
        <taxon>Vertebrata</taxon>
        <taxon>Euteleostomi</taxon>
        <taxon>Mammalia</taxon>
        <taxon>Eutheria</taxon>
        <taxon>Euarchontoglires</taxon>
        <taxon>Glires</taxon>
        <taxon>Rodentia</taxon>
        <taxon>Sciuromorpha</taxon>
        <taxon>Sciuridae</taxon>
        <taxon>Xerinae</taxon>
        <taxon>Marmotini</taxon>
        <taxon>Spermophilus</taxon>
    </lineage>
</organism>